<keyword id="KW-0614">Plasmid</keyword>
<keyword id="KW-0843">Virulence</keyword>
<reference key="1">
    <citation type="journal article" date="1988" name="Mol. Plant Microbe Interact.">
        <title>The avirulence gene avrBs1 from Xanthomonas campestris pv. vesicatoria encodes a 50-kD protein.</title>
        <authorList>
            <person name="Ronald P.C."/>
            <person name="Staskawicz B.J."/>
        </authorList>
    </citation>
    <scope>NUCLEOTIDE SEQUENCE [GENOMIC DNA]</scope>
</reference>
<geneLocation type="plasmid">
    <name>pXV11</name>
</geneLocation>
<name>YAV5_XANEU</name>
<accession>P19520</accession>
<proteinExistence type="predicted"/>
<protein>
    <recommendedName>
        <fullName>Uncharacterized 50 kDa avirulence protein in avrBs1 region</fullName>
    </recommendedName>
</protein>
<sequence length="445" mass="49800">MSDMKVNFSSKIIDSTPSEEEVATQQDSYTKSGLVAPSLDSQALKKAPRKRVIKENIAALHTSSLERVHQKKVLVQNLAQLQRGLAKINGRVELEELIDGFSVKELLIKRNPKIAEEYGEGNPLMIRSLRFSNPQEVTSKLGAEGKTPAKREVDTICNKSTLHDIVMTPASLVKKEVRMNLISEVPRAKDKQKYRGLPSVVYGQSSRRSESDYLTSRNGFGDVHSLKSNNAFNSDYEKICGSLSHAEKLGLIERNLTPFIRHDPDRISTDFVHSIEELAEHQMLLQSRKPASALRHNEYCTKLELWDAKAIAVGESRALAVATLIEFNLEMLSIAQEIDDDGHKSKMVADFIERQLSWLGPQTALDSKSTLERVSAVTIQEREFIANEISRSLRQGVSLCTYDKDEAGSHIREMSLLDFRVEEIIEGISIFISSKLLHVTNAGEA</sequence>
<organism>
    <name type="scientific">Xanthomonas euvesicatoria</name>
    <dbReference type="NCBI Taxonomy" id="456327"/>
    <lineage>
        <taxon>Bacteria</taxon>
        <taxon>Pseudomonadati</taxon>
        <taxon>Pseudomonadota</taxon>
        <taxon>Gammaproteobacteria</taxon>
        <taxon>Lysobacterales</taxon>
        <taxon>Lysobacteraceae</taxon>
        <taxon>Xanthomonas</taxon>
    </lineage>
</organism>
<dbReference type="EMBL" id="M32142">
    <property type="protein sequence ID" value="AAA27594.1"/>
    <property type="molecule type" value="Genomic_DNA"/>
</dbReference>
<dbReference type="InterPro" id="IPR053508">
    <property type="entry name" value="Pathogen_avirulence"/>
</dbReference>
<dbReference type="NCBIfam" id="NF041307">
    <property type="entry name" value="AvrBs1"/>
    <property type="match status" value="1"/>
</dbReference>
<feature type="chain" id="PRO_0000066141" description="Uncharacterized 50 kDa avirulence protein in avrBs1 region">
    <location>
        <begin position="1"/>
        <end position="445"/>
    </location>
</feature>
<comment type="miscellaneous">
    <text>This is one of the putative proteins coded by the open reading frames within the region required for AvrBs1 activity.</text>
</comment>